<name>IKKA_HUMAN</name>
<proteinExistence type="evidence at protein level"/>
<reference key="1">
    <citation type="journal article" date="1997" name="Cell">
        <title>Identification and characterization of an IkappaB kinase.</title>
        <authorList>
            <person name="Regnier C.H."/>
            <person name="Song H.Y."/>
            <person name="Gao X."/>
            <person name="Goeddel D.V."/>
            <person name="Cao Z."/>
            <person name="Rothe M."/>
        </authorList>
    </citation>
    <scope>NUCLEOTIDE SEQUENCE [MRNA]</scope>
    <scope>FUNCTION</scope>
    <scope>CATALYTIC ACTIVITY</scope>
    <scope>MUTAGENESIS OF LYS-44</scope>
    <scope>VARIANT ILE-268</scope>
    <source>
        <tissue>T-cell</tissue>
    </source>
</reference>
<reference key="2">
    <citation type="journal article" date="1997" name="Nature">
        <title>A cytokine-responsive IkappaB kinase that activates the transcription factor NF-kappaB.</title>
        <authorList>
            <person name="DiDonato J.A."/>
            <person name="Hayakawa M."/>
            <person name="Rothwarf D.M."/>
            <person name="Zandi E."/>
            <person name="Karin M."/>
        </authorList>
    </citation>
    <scope>NUCLEOTIDE SEQUENCE [MRNA]</scope>
    <scope>PARTIAL PROTEIN SEQUENCE</scope>
    <scope>FUNCTION</scope>
    <scope>CATALYTIC ACTIVITY</scope>
    <scope>VARIANT ILE-268</scope>
</reference>
<reference key="3">
    <citation type="journal article" date="1997" name="Science">
        <title>IKK-1 and IKK-2: cytokine-activated IkappaB kinases essential for NF-kappaB activation.</title>
        <authorList>
            <person name="Mercurio F."/>
            <person name="Zhu H."/>
            <person name="Murray B.W."/>
            <person name="Shevchenko A."/>
            <person name="Bennett B.L."/>
            <person name="Li J.W."/>
            <person name="Young D.B."/>
            <person name="Barbosa M."/>
            <person name="Mann M."/>
            <person name="Manning A."/>
            <person name="Rao A."/>
        </authorList>
    </citation>
    <scope>NUCLEOTIDE SEQUENCE [MRNA]</scope>
    <scope>PARTIAL PROTEIN SEQUENCE</scope>
    <scope>FUNCTION</scope>
    <scope>CATALYTIC ACTIVITY</scope>
    <scope>MUTAGENESIS OF LYS-44 AND SER-176</scope>
    <source>
        <tissue>Cervix carcinoma</tissue>
    </source>
</reference>
<reference key="4">
    <citation type="journal article" date="1998" name="Gene">
        <title>IkappaB kinase-alpha and -beta genes are coexpressed in adult and embryonic tissues but localized to different human chromosomes.</title>
        <authorList>
            <person name="Hu M.C.-T."/>
            <person name="Wang Y.-P."/>
        </authorList>
    </citation>
    <scope>NUCLEOTIDE SEQUENCE [MRNA]</scope>
    <scope>VARIANT ILE-268</scope>
    <source>
        <tissue>Heart</tissue>
    </source>
</reference>
<reference key="5">
    <citation type="submission" date="2004-06" db="EMBL/GenBank/DDBJ databases">
        <authorList>
            <consortium name="SeattleSNPs variation discovery resource"/>
        </authorList>
    </citation>
    <scope>NUCLEOTIDE SEQUENCE [GENOMIC DNA]</scope>
</reference>
<reference key="6">
    <citation type="journal article" date="2004" name="Nature">
        <title>The DNA sequence and comparative analysis of human chromosome 10.</title>
        <authorList>
            <person name="Deloukas P."/>
            <person name="Earthrowl M.E."/>
            <person name="Grafham D.V."/>
            <person name="Rubenfield M."/>
            <person name="French L."/>
            <person name="Steward C.A."/>
            <person name="Sims S.K."/>
            <person name="Jones M.C."/>
            <person name="Searle S."/>
            <person name="Scott C."/>
            <person name="Howe K."/>
            <person name="Hunt S.E."/>
            <person name="Andrews T.D."/>
            <person name="Gilbert J.G.R."/>
            <person name="Swarbreck D."/>
            <person name="Ashurst J.L."/>
            <person name="Taylor A."/>
            <person name="Battles J."/>
            <person name="Bird C.P."/>
            <person name="Ainscough R."/>
            <person name="Almeida J.P."/>
            <person name="Ashwell R.I.S."/>
            <person name="Ambrose K.D."/>
            <person name="Babbage A.K."/>
            <person name="Bagguley C.L."/>
            <person name="Bailey J."/>
            <person name="Banerjee R."/>
            <person name="Bates K."/>
            <person name="Beasley H."/>
            <person name="Bray-Allen S."/>
            <person name="Brown A.J."/>
            <person name="Brown J.Y."/>
            <person name="Burford D.C."/>
            <person name="Burrill W."/>
            <person name="Burton J."/>
            <person name="Cahill P."/>
            <person name="Camire D."/>
            <person name="Carter N.P."/>
            <person name="Chapman J.C."/>
            <person name="Clark S.Y."/>
            <person name="Clarke G."/>
            <person name="Clee C.M."/>
            <person name="Clegg S."/>
            <person name="Corby N."/>
            <person name="Coulson A."/>
            <person name="Dhami P."/>
            <person name="Dutta I."/>
            <person name="Dunn M."/>
            <person name="Faulkner L."/>
            <person name="Frankish A."/>
            <person name="Frankland J.A."/>
            <person name="Garner P."/>
            <person name="Garnett J."/>
            <person name="Gribble S."/>
            <person name="Griffiths C."/>
            <person name="Grocock R."/>
            <person name="Gustafson E."/>
            <person name="Hammond S."/>
            <person name="Harley J.L."/>
            <person name="Hart E."/>
            <person name="Heath P.D."/>
            <person name="Ho T.P."/>
            <person name="Hopkins B."/>
            <person name="Horne J."/>
            <person name="Howden P.J."/>
            <person name="Huckle E."/>
            <person name="Hynds C."/>
            <person name="Johnson C."/>
            <person name="Johnson D."/>
            <person name="Kana A."/>
            <person name="Kay M."/>
            <person name="Kimberley A.M."/>
            <person name="Kershaw J.K."/>
            <person name="Kokkinaki M."/>
            <person name="Laird G.K."/>
            <person name="Lawlor S."/>
            <person name="Lee H.M."/>
            <person name="Leongamornlert D.A."/>
            <person name="Laird G."/>
            <person name="Lloyd C."/>
            <person name="Lloyd D.M."/>
            <person name="Loveland J."/>
            <person name="Lovell J."/>
            <person name="McLaren S."/>
            <person name="McLay K.E."/>
            <person name="McMurray A."/>
            <person name="Mashreghi-Mohammadi M."/>
            <person name="Matthews L."/>
            <person name="Milne S."/>
            <person name="Nickerson T."/>
            <person name="Nguyen M."/>
            <person name="Overton-Larty E."/>
            <person name="Palmer S.A."/>
            <person name="Pearce A.V."/>
            <person name="Peck A.I."/>
            <person name="Pelan S."/>
            <person name="Phillimore B."/>
            <person name="Porter K."/>
            <person name="Rice C.M."/>
            <person name="Rogosin A."/>
            <person name="Ross M.T."/>
            <person name="Sarafidou T."/>
            <person name="Sehra H.K."/>
            <person name="Shownkeen R."/>
            <person name="Skuce C.D."/>
            <person name="Smith M."/>
            <person name="Standring L."/>
            <person name="Sycamore N."/>
            <person name="Tester J."/>
            <person name="Thorpe A."/>
            <person name="Torcasso W."/>
            <person name="Tracey A."/>
            <person name="Tromans A."/>
            <person name="Tsolas J."/>
            <person name="Wall M."/>
            <person name="Walsh J."/>
            <person name="Wang H."/>
            <person name="Weinstock K."/>
            <person name="West A.P."/>
            <person name="Willey D.L."/>
            <person name="Whitehead S.L."/>
            <person name="Wilming L."/>
            <person name="Wray P.W."/>
            <person name="Young L."/>
            <person name="Chen Y."/>
            <person name="Lovering R.C."/>
            <person name="Moschonas N.K."/>
            <person name="Siebert R."/>
            <person name="Fechtel K."/>
            <person name="Bentley D."/>
            <person name="Durbin R.M."/>
            <person name="Hubbard T."/>
            <person name="Doucette-Stamm L."/>
            <person name="Beck S."/>
            <person name="Smith D.R."/>
            <person name="Rogers J."/>
        </authorList>
    </citation>
    <scope>NUCLEOTIDE SEQUENCE [LARGE SCALE GENOMIC DNA]</scope>
    <scope>VARIANT ILE-268</scope>
</reference>
<reference key="7">
    <citation type="journal article" date="1995" name="Cell. Mol. Biol. Res.">
        <title>CHUK, a new member of the helix-loop-helix and leucine zipper families of interacting proteins, contains a serine-threonine kinase catalytic domain.</title>
        <authorList>
            <person name="Connelly M.A."/>
            <person name="Marcu K.B."/>
        </authorList>
    </citation>
    <scope>NUCLEOTIDE SEQUENCE [MRNA] OF 32-745</scope>
    <scope>VARIANT ILE-268</scope>
    <source>
        <tissue>Cervix carcinoma</tissue>
    </source>
</reference>
<reference key="8">
    <citation type="journal article" date="2006" name="Proc. Natl. Acad. Sci. U.S.A.">
        <title>Acetylation of MEK2 and I kappa B kinase (IKK) activation loop residues by YopJ inhibits signaling.</title>
        <authorList>
            <person name="Mittal R."/>
            <person name="Peak-Chew S.Y."/>
            <person name="McMahon H.T."/>
        </authorList>
    </citation>
    <scope>PROTEIN SEQUENCE OF 169-181</scope>
    <scope>INACTIVATION BY YERSINIA YOPJ (MICROBIAL INFECTION)</scope>
    <scope>ACETYLATION AT THR-179 (MICROBIAL INFECTION)</scope>
    <scope>IDENTIFICATION BY MASS SPECTROMETRY</scope>
</reference>
<reference key="9">
    <citation type="journal article" date="1998" name="Nature">
        <title>IKAP is a scaffold protein of the IkappaB kinase complex.</title>
        <authorList>
            <person name="Cohen L."/>
            <person name="Henzel W.J."/>
            <person name="Baeuerle P.A."/>
        </authorList>
    </citation>
    <scope>IDENTIFICATION IN A COMPLEX WITH IKBKB; NFKBIA; RELA; ELP1 AND MAP3K14</scope>
</reference>
<reference key="10">
    <citation type="journal article" date="1998" name="Proc. Natl. Acad. Sci. U.S.A.">
        <title>NF-kappaB-inducing kinase activates IKK-alpha by phosphorylation of Ser-176.</title>
        <authorList>
            <person name="Ling L."/>
            <person name="Cao Z."/>
            <person name="Goeddel D.V."/>
        </authorList>
    </citation>
    <scope>PHOSPHORYLATION AT SER-176</scope>
    <scope>MUTAGENESIS OF SER-176; THR-179 AND SER-180</scope>
</reference>
<reference key="11">
    <citation type="journal article" date="1999" name="Nature">
        <title>NF-kappaB activation by tumour necrosis factor requires the Akt serine-threonine kinase.</title>
        <authorList>
            <person name="Ozes O.N."/>
            <person name="Mayo L.D."/>
            <person name="Gustin J.A."/>
            <person name="Pfeffer S.R."/>
            <person name="Pfeffer L.M."/>
            <person name="Donner D.B."/>
        </authorList>
    </citation>
    <scope>PHOSPHORYLATION AT THR-23</scope>
    <scope>MUTAGENESIS OF THR-23</scope>
</reference>
<reference key="12">
    <citation type="journal article" date="1999" name="Science">
        <title>Positive and negative regulation of IkappaB kinase activity through IKKbeta subunit phosphorylation.</title>
        <authorList>
            <person name="Delhase M."/>
            <person name="Hayakawa M."/>
            <person name="Chen Y."/>
            <person name="Karin M."/>
        </authorList>
    </citation>
    <scope>INTERACTION WITH IKBKB</scope>
</reference>
<reference key="13">
    <citation type="journal article" date="1998" name="Mol. Cell. Biol.">
        <title>Coordinate regulation of IkappaB kinases by mitogen-activated protein kinase kinase kinase 1 and NF-kappaB-inducing kinase.</title>
        <authorList>
            <person name="Nemoto S."/>
            <person name="DiDonato J.A."/>
            <person name="Lin A."/>
        </authorList>
    </citation>
    <scope>IKK PHOSPHORYLATION</scope>
</reference>
<reference key="14">
    <citation type="journal article" date="2000" name="Am. J. Physiol.">
        <title>The I kappa B/NF-kappa B system: a key determinant of mucosal inflammation and protection.</title>
        <authorList>
            <person name="Jobin C."/>
            <person name="Sartor R.B."/>
        </authorList>
    </citation>
    <scope>REVIEW</scope>
</reference>
<reference key="15">
    <citation type="journal article" date="2002" name="Mol. Cell. Biol.">
        <title>Regulation of SRC-3 (pCIP/ACTR/AIB-1/RAC-3/TRAM-1) coactivator activity by I kappa B kinase.</title>
        <authorList>
            <person name="Wu R.-C."/>
            <person name="Qin J."/>
            <person name="Hashimoto Y."/>
            <person name="Wong J."/>
            <person name="Xu J."/>
            <person name="Tsai S.Y."/>
            <person name="Tsai M.-J."/>
            <person name="O'Malley B.W."/>
        </authorList>
    </citation>
    <scope>SUBUNIT OF A COMPLEX CONTAINING CREBBP; NCOA2; NCOA3; IKBKB AND IKBKG</scope>
</reference>
<reference key="16">
    <citation type="journal article" date="2003" name="Mol. Cell. Biol.">
        <title>Tetrameric oligomerization of IkappaB kinase gamma (IKKgamma) is obligatory for IKK complex activity and NF-kappaB activation.</title>
        <authorList>
            <person name="Tegethoff S."/>
            <person name="Behlke J."/>
            <person name="Scheidereit C."/>
        </authorList>
    </citation>
    <scope>COMPOSITION OF THE IKK COMPLEX</scope>
</reference>
<reference key="17">
    <citation type="journal article" date="2003" name="Nature">
        <title>Histone H3 phosphorylation by IKK-alpha is critical for cytokine-induced gene expression.</title>
        <authorList>
            <person name="Yamamoto Y."/>
            <person name="Verma U.N."/>
            <person name="Prajapati S."/>
            <person name="Kwak Y.T."/>
            <person name="Gaynor R.B."/>
        </authorList>
    </citation>
    <scope>SUBCELLULAR LOCATION</scope>
    <scope>FUNCTION IN PHOSPHORYLATION OF HISTONE H3</scope>
</reference>
<reference key="18">
    <citation type="journal article" date="2004" name="Cell">
        <title>IkappaB kinase promotes tumorigenesis through inhibition of forkhead FOXO3a.</title>
        <authorList>
            <person name="Hu M.C."/>
            <person name="Lee D.F."/>
            <person name="Xia W."/>
            <person name="Golfman L.S."/>
            <person name="Ou-Yang F."/>
            <person name="Yang J.Y."/>
            <person name="Zou Y."/>
            <person name="Bao S."/>
            <person name="Hanada N."/>
            <person name="Saso H."/>
            <person name="Kobayashi R."/>
            <person name="Hung M.C."/>
        </authorList>
    </citation>
    <scope>FUNCTION</scope>
    <scope>INTERACTION WITH FOXO3</scope>
</reference>
<reference key="19">
    <citation type="journal article" date="2004" name="J. Biol. Chem.">
        <title>PAN1/NALP2/PYPAF2, an inducible inflammatory mediator that regulates NF-kappaB and caspase-1 activation in macrophages.</title>
        <authorList>
            <person name="Bruey J.-M."/>
            <person name="Bruey-Sedano N."/>
            <person name="Newman R."/>
            <person name="Chandler S."/>
            <person name="Stehlik C."/>
            <person name="Reed J.C."/>
        </authorList>
    </citation>
    <scope>INTERACTION WITH NALP2</scope>
</reference>
<reference key="20">
    <citation type="journal article" date="2004" name="Proc. Natl. Acad. Sci. U.S.A.">
        <title>beta-Arrestin inhibits NF-kappaB activity by means of its interaction with the NF-kappaB inhibitor IkappaBalpha.</title>
        <authorList>
            <person name="Witherow D.S."/>
            <person name="Garrison T.R."/>
            <person name="Miller W.E."/>
            <person name="Lefkowitz R.J."/>
        </authorList>
    </citation>
    <scope>INTERACTION WITH ARRB1 AND ARRB2</scope>
</reference>
<reference key="21">
    <citation type="journal article" date="2005" name="Nature">
        <title>Cardif is an adaptor protein in the RIG-I antiviral pathway and is targeted by hepatitis C virus.</title>
        <authorList>
            <person name="Meylan E."/>
            <person name="Curran J."/>
            <person name="Hofmann K."/>
            <person name="Moradpour D."/>
            <person name="Binder M."/>
            <person name="Bartenschlager R."/>
            <person name="Tschopp J."/>
        </authorList>
    </citation>
    <scope>INTERACTION WITH MAVS</scope>
</reference>
<reference key="22">
    <citation type="journal article" date="2007" name="Cell">
        <title>Proinflammatory stimuli induce IKKalpha-mediated phosphorylation of PIAS1 to restrict inflammation and immunity.</title>
        <authorList>
            <person name="Liu B."/>
            <person name="Yang Y."/>
            <person name="Chernishof V."/>
            <person name="Loo R.R."/>
            <person name="Jang H."/>
            <person name="Tahk S."/>
            <person name="Yang R."/>
            <person name="Mink S."/>
            <person name="Shultz D."/>
            <person name="Bellone C.J."/>
            <person name="Loo J.A."/>
            <person name="Shuai K."/>
        </authorList>
    </citation>
    <scope>INTERACTION WITH PIAS1</scope>
</reference>
<reference key="23">
    <citation type="journal article" date="2007" name="Mol. Cell">
        <title>Phosphorylation of CBP by IKKalpha promotes cell growth by switching the binding preference of CBP from p53 to NF-kappaB.</title>
        <authorList>
            <person name="Huang W.C."/>
            <person name="Ju T.K."/>
            <person name="Hung M.C."/>
            <person name="Chen C.C."/>
        </authorList>
    </citation>
    <scope>FUNCTION IN PHOSPHORYLATION OF CREBBP</scope>
</reference>
<reference key="24">
    <citation type="journal article" date="2008" name="Immunol. Res.">
        <title>The IkappaB kinase complex: master regulator of NF-kappaB signaling.</title>
        <authorList>
            <person name="Solt L.A."/>
            <person name="May M.J."/>
        </authorList>
    </citation>
    <scope>REVIEW</scope>
    <scope>DOMAIN</scope>
</reference>
<reference key="25">
    <citation type="journal article" date="2009" name="J. Biol. Chem.">
        <title>SGK1 phosphorylation of IkappaB Kinase alpha and p300 Up-regulates NF-kappaB activity and increases N-Methyl-D-aspartate receptor NR2A and NR2B expression.</title>
        <authorList>
            <person name="Tai D.J."/>
            <person name="Su C.C."/>
            <person name="Ma Y.L."/>
            <person name="Lee E.H."/>
        </authorList>
    </citation>
    <scope>PHOSPHORYLATION AT THR-23 AND SER-180 BY SGK1</scope>
</reference>
<reference key="26">
    <citation type="journal article" date="2009" name="Mol. Cell">
        <title>PKC phosphorylation of TRAF2 mediates IKKalpha/beta recruitment and K63-linked polyubiquitination.</title>
        <authorList>
            <person name="Li S."/>
            <person name="Wang L."/>
            <person name="Dorf M.E."/>
        </authorList>
    </citation>
    <scope>INTERACTION WITH TRAF2</scope>
</reference>
<reference key="27">
    <citation type="journal article" date="2010" name="Cell">
        <title>NLRC5 negatively regulates the NF-kappaB and type I interferon signaling pathways.</title>
        <authorList>
            <person name="Cui J."/>
            <person name="Zhu L."/>
            <person name="Xia X."/>
            <person name="Wang H.Y."/>
            <person name="Legras X."/>
            <person name="Hong J."/>
            <person name="Ji J."/>
            <person name="Shen P."/>
            <person name="Zheng S."/>
            <person name="Chen Z.J."/>
            <person name="Wang R.F."/>
        </authorList>
    </citation>
    <scope>FUNCTION</scope>
    <scope>INTERACTION WITH NLRC5</scope>
</reference>
<reference key="28">
    <citation type="journal article" date="2010" name="Proc. Natl. Acad. Sci. U.S.A.">
        <title>The Listeria monocytogenes InlC protein interferes with innate immune responses by targeting the I{kappa}B kinase subunit IKK{alpha}.</title>
        <authorList>
            <person name="Gouin E."/>
            <person name="Adib-Conquy M."/>
            <person name="Balestrino D."/>
            <person name="Nahori M.A."/>
            <person name="Villiers V."/>
            <person name="Colland F."/>
            <person name="Dramsi S."/>
            <person name="Dussurget O."/>
            <person name="Cossart P."/>
        </authorList>
    </citation>
    <scope>INTERACTION WITH L.MONOCYTOGENES INLC (MICROBIAL INFECTION)</scope>
</reference>
<reference key="29">
    <citation type="journal article" date="2010" name="N. Engl. J. Med.">
        <title>Mutant CHUK and severe fetal encasement malformation.</title>
        <authorList>
            <person name="Lahtela J."/>
            <person name="Nousiainen H.O."/>
            <person name="Stefanovic V."/>
            <person name="Tallila J."/>
            <person name="Viskari H."/>
            <person name="Karikoski R."/>
            <person name="Gentile M."/>
            <person name="Saloranta C."/>
            <person name="Varilo T."/>
            <person name="Salonen R."/>
            <person name="Kestila M."/>
        </authorList>
    </citation>
    <scope>INVOLVEMENT IN COCOS</scope>
</reference>
<reference key="30">
    <citation type="journal article" date="2010" name="Sci. Signal.">
        <title>Negative feedback in noncanonical NF-kappaB signaling modulates NIK stability through IKKalpha-mediated phosphorylation.</title>
        <authorList>
            <person name="Razani B."/>
            <person name="Zarnegar B."/>
            <person name="Ytterberg A.J."/>
            <person name="Shiba T."/>
            <person name="Dempsey P.W."/>
            <person name="Ware C.F."/>
            <person name="Loo J.A."/>
            <person name="Cheng G."/>
        </authorList>
    </citation>
    <scope>FUNCTION IN MAP3K14 PHOSPHORYLATION</scope>
</reference>
<reference key="31">
    <citation type="journal article" date="2011" name="BMC Syst. Biol.">
        <title>Initial characterization of the human central proteome.</title>
        <authorList>
            <person name="Burkard T.R."/>
            <person name="Planyavsky M."/>
            <person name="Kaupe I."/>
            <person name="Breitwieser F.P."/>
            <person name="Buerckstuemmer T."/>
            <person name="Bennett K.L."/>
            <person name="Superti-Furga G."/>
            <person name="Colinge J."/>
        </authorList>
    </citation>
    <scope>IDENTIFICATION BY MASS SPECTROMETRY [LARGE SCALE ANALYSIS]</scope>
</reference>
<reference key="32">
    <citation type="journal article" date="2011" name="Nat. Immunol.">
        <title>The kinase IKKalpha inhibits activation of the transcription factor NF-kappaB by phosphorylating the regulatory molecule TAX1BP1.</title>
        <authorList>
            <person name="Shembade N."/>
            <person name="Pujari R."/>
            <person name="Harhaj N.S."/>
            <person name="Abbott D.W."/>
            <person name="Harhaj E.W."/>
        </authorList>
    </citation>
    <scope>FUNCTION IN PHOSPHORYLATION OF TAX1BP1</scope>
</reference>
<reference key="33">
    <citation type="journal article" date="2012" name="J. Biol. Chem.">
        <title>The zinc finger protein ZNF268 is overexpressed in human cervical cancer and contributes to tumorigenesis via enhancing NF-kappaB signaling.</title>
        <authorList>
            <person name="Wang W."/>
            <person name="Guo M."/>
            <person name="Hu L."/>
            <person name="Cai J."/>
            <person name="Zeng Y."/>
            <person name="Luo J."/>
            <person name="Shu Z."/>
            <person name="Li W."/>
            <person name="Huang Z."/>
        </authorList>
    </citation>
    <scope>INTERACTION WITH ZNF268</scope>
    <scope>SUBUNIT</scope>
</reference>
<reference key="34">
    <citation type="journal article" date="2013" name="J. Immunol.">
        <title>SASH1 is a scaffold molecule in endothelial TLR4 signaling.</title>
        <authorList>
            <person name="Dauphinee S.M."/>
            <person name="Clayton A."/>
            <person name="Hussainkhel A."/>
            <person name="Yang C."/>
            <person name="Park Y.J."/>
            <person name="Fuller M.E."/>
            <person name="Blonder J."/>
            <person name="Veenstra T.D."/>
            <person name="Karsan A."/>
        </authorList>
    </citation>
    <scope>INTERACTION WITH SASH1</scope>
</reference>
<reference key="35">
    <citation type="journal article" date="2015" name="Cell. Signal.">
        <title>IFIT5 positively regulates NF-kappaB signaling through synergizing the recruitment of IkappaB kinase (IKK) to TGF-beta-activated kinase 1 (TAK1).</title>
        <authorList>
            <person name="Zheng C."/>
            <person name="Zheng Z."/>
            <person name="Zhang Z."/>
            <person name="Meng J."/>
            <person name="Liu Y."/>
            <person name="Ke X."/>
            <person name="Hu Q."/>
            <person name="Wang H."/>
        </authorList>
    </citation>
    <scope>INTERACTION WITH IFIT5</scope>
</reference>
<reference key="36">
    <citation type="journal article" date="2016" name="Exp. Cell Res.">
        <title>LRRC14 attenuates Toll-like receptor-mediated NF-kappa-B signaling through disruption of IKK complex.</title>
        <authorList>
            <person name="Wu C."/>
            <person name="Yang Y."/>
            <person name="Ou J."/>
            <person name="Zhu L."/>
            <person name="Zhao W."/>
            <person name="Cui J."/>
        </authorList>
    </citation>
    <scope>INTERACTION WITH LRRC14</scope>
</reference>
<reference key="37">
    <citation type="journal article" date="2018" name="Biochem. J.">
        <title>DDX3 directly facilitates IKKalpha activation and regulates downstream signalling pathways.</title>
        <authorList>
            <person name="Fullam A."/>
            <person name="Gu L."/>
            <person name="Hoehn Y."/>
            <person name="Schroeder M."/>
        </authorList>
    </citation>
    <scope>INTERACTION WITH DDX3X</scope>
    <scope>SUBCELLULAR LOCATION</scope>
</reference>
<reference key="38">
    <citation type="journal article" date="2018" name="Nat. Commun.">
        <title>HUWE1 E3 ligase promotes PINK1/PARKIN-independent mitophagy by regulating AMBRA1 activation via IKKalpha.</title>
        <authorList>
            <person name="Di Rita A."/>
            <person name="Peschiaroli A."/>
            <person name="D'Acunzo P."/>
            <person name="Strobbe D."/>
            <person name="Hu Z."/>
            <person name="Gruber J."/>
            <person name="Nygaard M."/>
            <person name="Lambrughi M."/>
            <person name="Melino G."/>
            <person name="Papaleo E."/>
            <person name="Dengjel J."/>
            <person name="El Alaoui S."/>
            <person name="Campanella M."/>
            <person name="Doetsch V."/>
            <person name="Rogov V.V."/>
            <person name="Strappazzon F."/>
            <person name="Cecconi F."/>
        </authorList>
    </citation>
    <scope>FUNCTION</scope>
</reference>
<reference key="39">
    <citation type="journal article" date="2020" name="EMBO J.">
        <title>Negative regulation of NEMO signaling by the ubiquitin E3 ligase MARCH2.</title>
        <authorList>
            <person name="Chathuranga K."/>
            <person name="Kim T.H."/>
            <person name="Lee H."/>
            <person name="Park J.S."/>
            <person name="Kim J.H."/>
            <person name="Chathuranga W.A.G."/>
            <person name="Ekanayaka P."/>
            <person name="Choi Y.J."/>
            <person name="Lee C.H."/>
            <person name="Kim C.J."/>
            <person name="Jung J.U."/>
            <person name="Lee J.S."/>
        </authorList>
    </citation>
    <scope>IDENTIFICATION IN THE IKK COMPLEX</scope>
</reference>
<reference key="40">
    <citation type="journal article" date="2022" name="Int. J. Biol. Macromol.">
        <title>TRIM56 positively regulates TNFalpha-induced NF-kappaB signaling by enhancing the ubiquitination of TAK1.</title>
        <authorList>
            <person name="Liu Y."/>
            <person name="Chen Y."/>
            <person name="Ding C."/>
            <person name="Zhu X."/>
            <person name="Song X."/>
            <person name="Ren Y."/>
            <person name="Wang Q."/>
            <person name="Zhang Y."/>
            <person name="Sun X."/>
        </authorList>
    </citation>
    <scope>FUNCTION</scope>
    <scope>UBIQUITINATION BY TRIM56</scope>
</reference>
<reference key="41">
    <citation type="journal article" date="2015" name="Am. J. Med. Genet. A">
        <title>Expanding the genetic and phenotypic spectrum of popliteal pterygium disorders.</title>
        <authorList>
            <person name="Leslie E.J."/>
            <person name="O'Sullivan J."/>
            <person name="Cunningham M.L."/>
            <person name="Singh A."/>
            <person name="Goudy S.L."/>
            <person name="Ababneh F."/>
            <person name="Alsubaie L."/>
            <person name="Ch'ng G.S."/>
            <person name="van der Laar I.M."/>
            <person name="Hoogeboom A.J."/>
            <person name="Dunnwald M."/>
            <person name="Kapoor S."/>
            <person name="Jiramongkolchai P."/>
            <person name="Standley J."/>
            <person name="Manak J.R."/>
            <person name="Murray J.C."/>
            <person name="Dixon M.J."/>
        </authorList>
    </citation>
    <scope>INVOLVEMENT IN BPS2</scope>
</reference>
<reference key="42">
    <citation type="journal article" date="2007" name="Nature">
        <title>Patterns of somatic mutation in human cancer genomes.</title>
        <authorList>
            <person name="Greenman C."/>
            <person name="Stephens P."/>
            <person name="Smith R."/>
            <person name="Dalgliesh G.L."/>
            <person name="Hunter C."/>
            <person name="Bignell G."/>
            <person name="Davies H."/>
            <person name="Teague J."/>
            <person name="Butler A."/>
            <person name="Stevens C."/>
            <person name="Edkins S."/>
            <person name="O'Meara S."/>
            <person name="Vastrik I."/>
            <person name="Schmidt E.E."/>
            <person name="Avis T."/>
            <person name="Barthorpe S."/>
            <person name="Bhamra G."/>
            <person name="Buck G."/>
            <person name="Choudhury B."/>
            <person name="Clements J."/>
            <person name="Cole J."/>
            <person name="Dicks E."/>
            <person name="Forbes S."/>
            <person name="Gray K."/>
            <person name="Halliday K."/>
            <person name="Harrison R."/>
            <person name="Hills K."/>
            <person name="Hinton J."/>
            <person name="Jenkinson A."/>
            <person name="Jones D."/>
            <person name="Menzies A."/>
            <person name="Mironenko T."/>
            <person name="Perry J."/>
            <person name="Raine K."/>
            <person name="Richardson D."/>
            <person name="Shepherd R."/>
            <person name="Small A."/>
            <person name="Tofts C."/>
            <person name="Varian J."/>
            <person name="Webb T."/>
            <person name="West S."/>
            <person name="Widaa S."/>
            <person name="Yates A."/>
            <person name="Cahill D.P."/>
            <person name="Louis D.N."/>
            <person name="Goldstraw P."/>
            <person name="Nicholson A.G."/>
            <person name="Brasseur F."/>
            <person name="Looijenga L."/>
            <person name="Weber B.L."/>
            <person name="Chiew Y.-E."/>
            <person name="DeFazio A."/>
            <person name="Greaves M.F."/>
            <person name="Green A.R."/>
            <person name="Campbell P."/>
            <person name="Birney E."/>
            <person name="Easton D.F."/>
            <person name="Chenevix-Trench G."/>
            <person name="Tan M.-H."/>
            <person name="Khoo S.K."/>
            <person name="Teh B.T."/>
            <person name="Yuen S.T."/>
            <person name="Leung S.Y."/>
            <person name="Wooster R."/>
            <person name="Futreal P.A."/>
            <person name="Stratton M.R."/>
        </authorList>
    </citation>
    <scope>VARIANTS [LARGE SCALE ANALYSIS] CYS-126; ALA-155 AND ILE-268</scope>
</reference>
<reference key="43">
    <citation type="journal article" date="2008" name="Structure">
        <title>Structure of a NEMO/IKK-associating domain reveals architecture of the interaction site.</title>
        <authorList>
            <person name="Rushe M."/>
            <person name="Silvian L."/>
            <person name="Bixler S."/>
            <person name="Chen L.L."/>
            <person name="Cheung A."/>
            <person name="Bowes S."/>
            <person name="Cuervo H."/>
            <person name="Berkowitz S."/>
            <person name="Zheng T."/>
            <person name="Guckian K."/>
            <person name="Pellegrini M."/>
            <person name="Lugovskoy A."/>
        </authorList>
    </citation>
    <scope>X-RAY CRYSTALLOGRAPHY (2.25 ANGSTROMS) OF 732-745</scope>
</reference>
<accession>O15111</accession>
<accession>O14666</accession>
<accession>Q13132</accession>
<accession>Q5W0I4</accession>
<accession>Q92467</accession>
<dbReference type="EC" id="2.7.11.10" evidence="36 37 38"/>
<dbReference type="EMBL" id="AF012890">
    <property type="protein sequence ID" value="AAC51662.1"/>
    <property type="molecule type" value="mRNA"/>
</dbReference>
<dbReference type="EMBL" id="AF009225">
    <property type="protein sequence ID" value="AAC51671.1"/>
    <property type="molecule type" value="mRNA"/>
</dbReference>
<dbReference type="EMBL" id="AF080157">
    <property type="protein sequence ID" value="AAD08996.1"/>
    <property type="molecule type" value="mRNA"/>
</dbReference>
<dbReference type="EMBL" id="AY652653">
    <property type="protein sequence ID" value="AAT49098.1"/>
    <property type="molecule type" value="Genomic_DNA"/>
</dbReference>
<dbReference type="EMBL" id="AL138921">
    <property type="status" value="NOT_ANNOTATED_CDS"/>
    <property type="molecule type" value="Genomic_DNA"/>
</dbReference>
<dbReference type="EMBL" id="U22512">
    <property type="protein sequence ID" value="AAC50713.1"/>
    <property type="molecule type" value="mRNA"/>
</dbReference>
<dbReference type="CCDS" id="CCDS7488.1"/>
<dbReference type="RefSeq" id="NP_001269.3">
    <property type="nucleotide sequence ID" value="NM_001278.4"/>
</dbReference>
<dbReference type="PDB" id="3BRT">
    <property type="method" value="X-ray"/>
    <property type="resolution" value="2.25 A"/>
    <property type="chains" value="A/C=732-745"/>
</dbReference>
<dbReference type="PDB" id="5EBZ">
    <property type="method" value="X-ray"/>
    <property type="resolution" value="4.50 A"/>
    <property type="chains" value="A/B/C/D/E/F/G/H/I/J/K/L=10-660"/>
</dbReference>
<dbReference type="PDB" id="5TQW">
    <property type="method" value="EM"/>
    <property type="resolution" value="5.60 A"/>
    <property type="chains" value="A/B=10-660"/>
</dbReference>
<dbReference type="PDB" id="5TQX">
    <property type="method" value="EM"/>
    <property type="resolution" value="5.40 A"/>
    <property type="chains" value="A/B=10-660"/>
</dbReference>
<dbReference type="PDB" id="5TQY">
    <property type="method" value="EM"/>
    <property type="resolution" value="5.20 A"/>
    <property type="chains" value="A/B=10-660"/>
</dbReference>
<dbReference type="PDBsum" id="3BRT"/>
<dbReference type="PDBsum" id="5EBZ"/>
<dbReference type="PDBsum" id="5TQW"/>
<dbReference type="PDBsum" id="5TQX"/>
<dbReference type="PDBsum" id="5TQY"/>
<dbReference type="EMDB" id="EMD-8436"/>
<dbReference type="EMDB" id="EMD-8437"/>
<dbReference type="EMDB" id="EMD-8438"/>
<dbReference type="EMDB" id="EMD-8439"/>
<dbReference type="SMR" id="O15111"/>
<dbReference type="BioGRID" id="107569">
    <property type="interactions" value="233"/>
</dbReference>
<dbReference type="ComplexPortal" id="CPX-3269">
    <property type="entry name" value="IkappaB kinase complex"/>
</dbReference>
<dbReference type="CORUM" id="O15111"/>
<dbReference type="DIP" id="DIP-27526N"/>
<dbReference type="ELM" id="O15111"/>
<dbReference type="FunCoup" id="O15111">
    <property type="interactions" value="2633"/>
</dbReference>
<dbReference type="IntAct" id="O15111">
    <property type="interactions" value="110"/>
</dbReference>
<dbReference type="MINT" id="O15111"/>
<dbReference type="STRING" id="9606.ENSP00000359424"/>
<dbReference type="BindingDB" id="O15111"/>
<dbReference type="ChEMBL" id="CHEMBL3476"/>
<dbReference type="DrugBank" id="DB06151">
    <property type="generic name" value="Acetylcysteine"/>
</dbReference>
<dbReference type="DrugBank" id="DB00233">
    <property type="generic name" value="Aminosalicylic acid"/>
</dbReference>
<dbReference type="DrugBank" id="DB00244">
    <property type="generic name" value="Mesalazine"/>
</dbReference>
<dbReference type="DrugBank" id="DB00795">
    <property type="generic name" value="Sulfasalazine"/>
</dbReference>
<dbReference type="DrugCentral" id="O15111"/>
<dbReference type="GuidetoPHARMACOLOGY" id="1989"/>
<dbReference type="GlyGen" id="O15111">
    <property type="glycosylation" value="3 sites, 1 N-linked glycan (1 site), 1 O-linked glycan (2 sites)"/>
</dbReference>
<dbReference type="iPTMnet" id="O15111"/>
<dbReference type="PhosphoSitePlus" id="O15111"/>
<dbReference type="BioMuta" id="CHUK"/>
<dbReference type="CPTAC" id="CPTAC-1220"/>
<dbReference type="CPTAC" id="CPTAC-1221"/>
<dbReference type="CPTAC" id="CPTAC-2837"/>
<dbReference type="CPTAC" id="CPTAC-3087"/>
<dbReference type="jPOST" id="O15111"/>
<dbReference type="MassIVE" id="O15111"/>
<dbReference type="PaxDb" id="9606-ENSP00000359424"/>
<dbReference type="PeptideAtlas" id="O15111"/>
<dbReference type="ProteomicsDB" id="48449"/>
<dbReference type="Pumba" id="O15111"/>
<dbReference type="Antibodypedia" id="801">
    <property type="antibodies" value="1457 antibodies from 52 providers"/>
</dbReference>
<dbReference type="DNASU" id="1147"/>
<dbReference type="Ensembl" id="ENST00000370397.8">
    <property type="protein sequence ID" value="ENSP00000359424.6"/>
    <property type="gene ID" value="ENSG00000213341.11"/>
</dbReference>
<dbReference type="GeneID" id="1147"/>
<dbReference type="KEGG" id="hsa:1147"/>
<dbReference type="MANE-Select" id="ENST00000370397.8">
    <property type="protein sequence ID" value="ENSP00000359424.6"/>
    <property type="RefSeq nucleotide sequence ID" value="NM_001278.5"/>
    <property type="RefSeq protein sequence ID" value="NP_001269.3"/>
</dbReference>
<dbReference type="UCSC" id="uc001kqp.4">
    <property type="organism name" value="human"/>
</dbReference>
<dbReference type="AGR" id="HGNC:1974"/>
<dbReference type="CTD" id="1147"/>
<dbReference type="DisGeNET" id="1147"/>
<dbReference type="GeneCards" id="CHUK"/>
<dbReference type="HGNC" id="HGNC:1974">
    <property type="gene designation" value="CHUK"/>
</dbReference>
<dbReference type="HPA" id="ENSG00000213341">
    <property type="expression patterns" value="Low tissue specificity"/>
</dbReference>
<dbReference type="MalaCards" id="CHUK"/>
<dbReference type="MIM" id="600664">
    <property type="type" value="gene"/>
</dbReference>
<dbReference type="MIM" id="613630">
    <property type="type" value="phenotype"/>
</dbReference>
<dbReference type="MIM" id="619339">
    <property type="type" value="phenotype"/>
</dbReference>
<dbReference type="neXtProt" id="NX_O15111"/>
<dbReference type="OpenTargets" id="ENSG00000213341"/>
<dbReference type="Orphanet" id="465824">
    <property type="disease" value="Fetal encasement syndrome"/>
</dbReference>
<dbReference type="PharmGKB" id="PA26510"/>
<dbReference type="VEuPathDB" id="HostDB:ENSG00000213341"/>
<dbReference type="eggNOG" id="KOG4250">
    <property type="taxonomic scope" value="Eukaryota"/>
</dbReference>
<dbReference type="GeneTree" id="ENSGT00950000182937"/>
<dbReference type="HOGENOM" id="CLU_000288_101_2_1"/>
<dbReference type="InParanoid" id="O15111"/>
<dbReference type="OMA" id="FILMDHI"/>
<dbReference type="OrthoDB" id="267381at2759"/>
<dbReference type="PAN-GO" id="O15111">
    <property type="GO annotations" value="8 GO annotations based on evolutionary models"/>
</dbReference>
<dbReference type="PhylomeDB" id="O15111"/>
<dbReference type="TreeFam" id="TF324269"/>
<dbReference type="BRENDA" id="2.7.11.10">
    <property type="organism ID" value="2681"/>
</dbReference>
<dbReference type="PathwayCommons" id="O15111"/>
<dbReference type="Reactome" id="R-HSA-1169091">
    <property type="pathway name" value="Activation of NF-kappaB in B cells"/>
</dbReference>
<dbReference type="Reactome" id="R-HSA-1236974">
    <property type="pathway name" value="ER-Phagosome pathway"/>
</dbReference>
<dbReference type="Reactome" id="R-HSA-168638">
    <property type="pathway name" value="NOD1/2 Signaling Pathway"/>
</dbReference>
<dbReference type="Reactome" id="R-HSA-168927">
    <property type="pathway name" value="TICAM1, RIP1-mediated IKK complex recruitment"/>
</dbReference>
<dbReference type="Reactome" id="R-HSA-1810476">
    <property type="pathway name" value="RIP-mediated NFkB activation via ZBP1"/>
</dbReference>
<dbReference type="Reactome" id="R-HSA-198323">
    <property type="pathway name" value="AKT phosphorylates targets in the cytosol"/>
</dbReference>
<dbReference type="Reactome" id="R-HSA-202424">
    <property type="pathway name" value="Downstream TCR signaling"/>
</dbReference>
<dbReference type="Reactome" id="R-HSA-2871837">
    <property type="pathway name" value="FCERI mediated NF-kB activation"/>
</dbReference>
<dbReference type="Reactome" id="R-HSA-445989">
    <property type="pathway name" value="TAK1-dependent IKK and NF-kappa-B activation"/>
</dbReference>
<dbReference type="Reactome" id="R-HSA-5357905">
    <property type="pathway name" value="Regulation of TNFR1 signaling"/>
</dbReference>
<dbReference type="Reactome" id="R-HSA-5357956">
    <property type="pathway name" value="TNFR1-induced NF-kappa-B signaling pathway"/>
</dbReference>
<dbReference type="Reactome" id="R-HSA-5602636">
    <property type="pathway name" value="IKBKB deficiency causes SCID"/>
</dbReference>
<dbReference type="Reactome" id="R-HSA-5603027">
    <property type="pathway name" value="IKBKG deficiency causes anhidrotic ectodermal dysplasia with immunodeficiency (EDA-ID) (via TLR)"/>
</dbReference>
<dbReference type="Reactome" id="R-HSA-5603029">
    <property type="pathway name" value="IkBA variant leads to EDA-ID"/>
</dbReference>
<dbReference type="Reactome" id="R-HSA-5607761">
    <property type="pathway name" value="Dectin-1 mediated noncanonical NF-kB signaling"/>
</dbReference>
<dbReference type="Reactome" id="R-HSA-5607764">
    <property type="pathway name" value="CLEC7A (Dectin-1) signaling"/>
</dbReference>
<dbReference type="Reactome" id="R-HSA-5674400">
    <property type="pathway name" value="Constitutive Signaling by AKT1 E17K in Cancer"/>
</dbReference>
<dbReference type="Reactome" id="R-HSA-5676590">
    <property type="pathway name" value="NIK--&gt;noncanonical NF-kB signaling"/>
</dbReference>
<dbReference type="Reactome" id="R-HSA-5684264">
    <property type="pathway name" value="MAP3K8 (TPL2)-dependent MAPK1/3 activation"/>
</dbReference>
<dbReference type="Reactome" id="R-HSA-9020702">
    <property type="pathway name" value="Interleukin-1 signaling"/>
</dbReference>
<dbReference type="Reactome" id="R-HSA-933542">
    <property type="pathway name" value="TRAF6 mediated NF-kB activation"/>
</dbReference>
<dbReference type="Reactome" id="R-HSA-933543">
    <property type="pathway name" value="NF-kB activation through FADD/RIP-1 pathway mediated by caspase-8 and -10"/>
</dbReference>
<dbReference type="Reactome" id="R-HSA-937039">
    <property type="pathway name" value="IRAK1 recruits IKK complex"/>
</dbReference>
<dbReference type="Reactome" id="R-HSA-937041">
    <property type="pathway name" value="IKK complex recruitment mediated by RIP1"/>
</dbReference>
<dbReference type="Reactome" id="R-HSA-9705671">
    <property type="pathway name" value="SARS-CoV-2 activates/modulates innate and adaptive immune responses"/>
</dbReference>
<dbReference type="Reactome" id="R-HSA-975144">
    <property type="pathway name" value="IRAK1 recruits IKK complex upon TLR7/8 or 9 stimulation"/>
</dbReference>
<dbReference type="Reactome" id="R-HSA-9758274">
    <property type="pathway name" value="Regulation of NF-kappa B signaling"/>
</dbReference>
<dbReference type="Reactome" id="R-HSA-9833482">
    <property type="pathway name" value="PKR-mediated signaling"/>
</dbReference>
<dbReference type="Reactome" id="R-HSA-9860276">
    <property type="pathway name" value="SLC15A4:TASL-dependent IRF5 activation"/>
</dbReference>
<dbReference type="Reactome" id="R-HSA-9860927">
    <property type="pathway name" value="Turbulent (oscillatory, disturbed) flow shear stress activates signaling by PIEZO1 and integrins in endothelial cells"/>
</dbReference>
<dbReference type="Reactome" id="R-HSA-9909505">
    <property type="pathway name" value="Modulation of host responses by IFN-stimulated genes"/>
</dbReference>
<dbReference type="SABIO-RK" id="O15111"/>
<dbReference type="SignaLink" id="O15111"/>
<dbReference type="SIGNOR" id="O15111"/>
<dbReference type="BioGRID-ORCS" id="1147">
    <property type="hits" value="43 hits in 1198 CRISPR screens"/>
</dbReference>
<dbReference type="CD-CODE" id="8C2F96ED">
    <property type="entry name" value="Centrosome"/>
</dbReference>
<dbReference type="ChiTaRS" id="CHUK">
    <property type="organism name" value="human"/>
</dbReference>
<dbReference type="EvolutionaryTrace" id="O15111"/>
<dbReference type="GeneWiki" id="CHUK"/>
<dbReference type="GenomeRNAi" id="1147"/>
<dbReference type="Pharos" id="O15111">
    <property type="development level" value="Tchem"/>
</dbReference>
<dbReference type="PRO" id="PR:O15111"/>
<dbReference type="Proteomes" id="UP000005640">
    <property type="component" value="Chromosome 10"/>
</dbReference>
<dbReference type="RNAct" id="O15111">
    <property type="molecule type" value="protein"/>
</dbReference>
<dbReference type="Bgee" id="ENSG00000213341">
    <property type="expression patterns" value="Expressed in secondary oocyte and 197 other cell types or tissues"/>
</dbReference>
<dbReference type="GO" id="GO:0035631">
    <property type="term" value="C:CD40 receptor complex"/>
    <property type="evidence" value="ECO:0000250"/>
    <property type="project" value="BHF-UCL"/>
</dbReference>
<dbReference type="GO" id="GO:0005737">
    <property type="term" value="C:cytoplasm"/>
    <property type="evidence" value="ECO:0000314"/>
    <property type="project" value="UniProtKB"/>
</dbReference>
<dbReference type="GO" id="GO:0009898">
    <property type="term" value="C:cytoplasmic side of plasma membrane"/>
    <property type="evidence" value="ECO:0000250"/>
    <property type="project" value="BHF-UCL"/>
</dbReference>
<dbReference type="GO" id="GO:0005829">
    <property type="term" value="C:cytosol"/>
    <property type="evidence" value="ECO:0000314"/>
    <property type="project" value="HPA"/>
</dbReference>
<dbReference type="GO" id="GO:0008385">
    <property type="term" value="C:IkappaB kinase complex"/>
    <property type="evidence" value="ECO:0000353"/>
    <property type="project" value="ComplexPortal"/>
</dbReference>
<dbReference type="GO" id="GO:0005654">
    <property type="term" value="C:nucleoplasm"/>
    <property type="evidence" value="ECO:0000314"/>
    <property type="project" value="HPA"/>
</dbReference>
<dbReference type="GO" id="GO:0005524">
    <property type="term" value="F:ATP binding"/>
    <property type="evidence" value="ECO:0007669"/>
    <property type="project" value="UniProtKB-KW"/>
</dbReference>
<dbReference type="GO" id="GO:0008384">
    <property type="term" value="F:IkappaB kinase activity"/>
    <property type="evidence" value="ECO:0000314"/>
    <property type="project" value="UniProtKB"/>
</dbReference>
<dbReference type="GO" id="GO:0046982">
    <property type="term" value="F:protein heterodimerization activity"/>
    <property type="evidence" value="ECO:0000314"/>
    <property type="project" value="UniProtKB"/>
</dbReference>
<dbReference type="GO" id="GO:0042803">
    <property type="term" value="F:protein homodimerization activity"/>
    <property type="evidence" value="ECO:0000314"/>
    <property type="project" value="UniProtKB"/>
</dbReference>
<dbReference type="GO" id="GO:0004672">
    <property type="term" value="F:protein kinase activity"/>
    <property type="evidence" value="ECO:0000314"/>
    <property type="project" value="UniProtKB"/>
</dbReference>
<dbReference type="GO" id="GO:0004674">
    <property type="term" value="F:protein serine/threonine kinase activity"/>
    <property type="evidence" value="ECO:0000314"/>
    <property type="project" value="ARUK-UCL"/>
</dbReference>
<dbReference type="GO" id="GO:0044877">
    <property type="term" value="F:protein-containing complex binding"/>
    <property type="evidence" value="ECO:0007669"/>
    <property type="project" value="Ensembl"/>
</dbReference>
<dbReference type="GO" id="GO:0097110">
    <property type="term" value="F:scaffold protein binding"/>
    <property type="evidence" value="ECO:0000314"/>
    <property type="project" value="MGI"/>
</dbReference>
<dbReference type="GO" id="GO:1990459">
    <property type="term" value="F:transferrin receptor binding"/>
    <property type="evidence" value="ECO:0000353"/>
    <property type="project" value="ARUK-UCL"/>
</dbReference>
<dbReference type="GO" id="GO:0009653">
    <property type="term" value="P:anatomical structure morphogenesis"/>
    <property type="evidence" value="ECO:0000304"/>
    <property type="project" value="ProtInc"/>
</dbReference>
<dbReference type="GO" id="GO:0007249">
    <property type="term" value="P:canonical NF-kappaB signal transduction"/>
    <property type="evidence" value="ECO:0000314"/>
    <property type="project" value="UniProtKB"/>
</dbReference>
<dbReference type="GO" id="GO:0071356">
    <property type="term" value="P:cellular response to tumor necrosis factor"/>
    <property type="evidence" value="ECO:0000314"/>
    <property type="project" value="UniProtKB"/>
</dbReference>
<dbReference type="GO" id="GO:0098586">
    <property type="term" value="P:cellular response to virus"/>
    <property type="evidence" value="ECO:0000315"/>
    <property type="project" value="CAFA"/>
</dbReference>
<dbReference type="GO" id="GO:0006955">
    <property type="term" value="P:immune response"/>
    <property type="evidence" value="ECO:0000304"/>
    <property type="project" value="ProtInc"/>
</dbReference>
<dbReference type="GO" id="GO:0006954">
    <property type="term" value="P:inflammatory response"/>
    <property type="evidence" value="ECO:0000304"/>
    <property type="project" value="UniProtKB"/>
</dbReference>
<dbReference type="GO" id="GO:0045087">
    <property type="term" value="P:innate immune response"/>
    <property type="evidence" value="ECO:0000304"/>
    <property type="project" value="UniProtKB"/>
</dbReference>
<dbReference type="GO" id="GO:0032088">
    <property type="term" value="P:negative regulation of NF-kappaB transcription factor activity"/>
    <property type="evidence" value="ECO:0000315"/>
    <property type="project" value="UniProtKB"/>
</dbReference>
<dbReference type="GO" id="GO:0038061">
    <property type="term" value="P:non-canonical NF-kappaB signal transduction"/>
    <property type="evidence" value="ECO:0000314"/>
    <property type="project" value="UniProt"/>
</dbReference>
<dbReference type="GO" id="GO:0043123">
    <property type="term" value="P:positive regulation of canonical NF-kappaB signal transduction"/>
    <property type="evidence" value="ECO:0000314"/>
    <property type="project" value="ARUK-UCL"/>
</dbReference>
<dbReference type="GO" id="GO:0032727">
    <property type="term" value="P:positive regulation of interferon-alpha production"/>
    <property type="evidence" value="ECO:0000315"/>
    <property type="project" value="CAFA"/>
</dbReference>
<dbReference type="GO" id="GO:0051092">
    <property type="term" value="P:positive regulation of NF-kappaB transcription factor activity"/>
    <property type="evidence" value="ECO:0000304"/>
    <property type="project" value="UniProtKB"/>
</dbReference>
<dbReference type="GO" id="GO:0045944">
    <property type="term" value="P:positive regulation of transcription by RNA polymerase II"/>
    <property type="evidence" value="ECO:0000314"/>
    <property type="project" value="UniProtKB"/>
</dbReference>
<dbReference type="GO" id="GO:0010034">
    <property type="term" value="P:response to acetate"/>
    <property type="evidence" value="ECO:0007669"/>
    <property type="project" value="Ensembl"/>
</dbReference>
<dbReference type="GO" id="GO:0043200">
    <property type="term" value="P:response to amino acid"/>
    <property type="evidence" value="ECO:0007669"/>
    <property type="project" value="Ensembl"/>
</dbReference>
<dbReference type="GO" id="GO:0061847">
    <property type="term" value="P:response to cholecystokinin"/>
    <property type="evidence" value="ECO:0007669"/>
    <property type="project" value="Ensembl"/>
</dbReference>
<dbReference type="GO" id="GO:0033194">
    <property type="term" value="P:response to hydroperoxide"/>
    <property type="evidence" value="ECO:0007669"/>
    <property type="project" value="Ensembl"/>
</dbReference>
<dbReference type="GO" id="GO:0009636">
    <property type="term" value="P:response to toxic substance"/>
    <property type="evidence" value="ECO:0007669"/>
    <property type="project" value="Ensembl"/>
</dbReference>
<dbReference type="GO" id="GO:0009615">
    <property type="term" value="P:response to virus"/>
    <property type="evidence" value="ECO:0000304"/>
    <property type="project" value="UniProtKB"/>
</dbReference>
<dbReference type="GO" id="GO:0009410">
    <property type="term" value="P:response to xenobiotic stimulus"/>
    <property type="evidence" value="ECO:0007669"/>
    <property type="project" value="Ensembl"/>
</dbReference>
<dbReference type="GO" id="GO:0003009">
    <property type="term" value="P:skeletal muscle contraction"/>
    <property type="evidence" value="ECO:0007669"/>
    <property type="project" value="Ensembl"/>
</dbReference>
<dbReference type="GO" id="GO:0051146">
    <property type="term" value="P:striated muscle cell differentiation"/>
    <property type="evidence" value="ECO:0007669"/>
    <property type="project" value="Ensembl"/>
</dbReference>
<dbReference type="GO" id="GO:0034142">
    <property type="term" value="P:toll-like receptor 4 signaling pathway"/>
    <property type="evidence" value="ECO:0000314"/>
    <property type="project" value="UniProt"/>
</dbReference>
<dbReference type="GO" id="GO:0033209">
    <property type="term" value="P:tumor necrosis factor-mediated signaling pathway"/>
    <property type="evidence" value="ECO:0000315"/>
    <property type="project" value="ARUK-UCL"/>
</dbReference>
<dbReference type="CDD" id="cd14039">
    <property type="entry name" value="STKc_IKK_alpha"/>
    <property type="match status" value="1"/>
</dbReference>
<dbReference type="CDD" id="cd17046">
    <property type="entry name" value="Ubl_IKKA_like"/>
    <property type="match status" value="1"/>
</dbReference>
<dbReference type="FunFam" id="1.20.1270.250:FF:000001">
    <property type="entry name" value="Inhibitor of nuclear factor kappa-B kinase subunit alpha"/>
    <property type="match status" value="1"/>
</dbReference>
<dbReference type="FunFam" id="3.10.20.90:FF:000061">
    <property type="entry name" value="Inhibitor of nuclear factor kappa-B kinase subunit alpha"/>
    <property type="match status" value="1"/>
</dbReference>
<dbReference type="FunFam" id="1.10.510.10:FF:000147">
    <property type="entry name" value="Inhibitor of nuclear factor kappa-B kinase subunit beta"/>
    <property type="match status" value="1"/>
</dbReference>
<dbReference type="Gene3D" id="1.20.1270.250">
    <property type="match status" value="1"/>
</dbReference>
<dbReference type="Gene3D" id="6.10.250.2110">
    <property type="match status" value="1"/>
</dbReference>
<dbReference type="Gene3D" id="3.10.20.90">
    <property type="entry name" value="Phosphatidylinositol 3-kinase Catalytic Subunit, Chain A, domain 1"/>
    <property type="match status" value="1"/>
</dbReference>
<dbReference type="Gene3D" id="1.10.510.10">
    <property type="entry name" value="Transferase(Phosphotransferase) domain 1"/>
    <property type="match status" value="1"/>
</dbReference>
<dbReference type="IDEAL" id="IID00526"/>
<dbReference type="InterPro" id="IPR041185">
    <property type="entry name" value="IKBKB_SDD"/>
</dbReference>
<dbReference type="InterPro" id="IPR046375">
    <property type="entry name" value="IKBKB_SDD_sf"/>
</dbReference>
<dbReference type="InterPro" id="IPR051180">
    <property type="entry name" value="IKK"/>
</dbReference>
<dbReference type="InterPro" id="IPR022007">
    <property type="entry name" value="IKKbetaNEMObind"/>
</dbReference>
<dbReference type="InterPro" id="IPR011009">
    <property type="entry name" value="Kinase-like_dom_sf"/>
</dbReference>
<dbReference type="InterPro" id="IPR000719">
    <property type="entry name" value="Prot_kinase_dom"/>
</dbReference>
<dbReference type="InterPro" id="IPR017441">
    <property type="entry name" value="Protein_kinase_ATP_BS"/>
</dbReference>
<dbReference type="InterPro" id="IPR008271">
    <property type="entry name" value="Ser/Thr_kinase_AS"/>
</dbReference>
<dbReference type="PANTHER" id="PTHR22969">
    <property type="entry name" value="IKB KINASE"/>
    <property type="match status" value="1"/>
</dbReference>
<dbReference type="PANTHER" id="PTHR22969:SF13">
    <property type="entry name" value="INHIBITOR OF NUCLEAR FACTOR KAPPA-B KINASE SUBUNIT ALPHA"/>
    <property type="match status" value="1"/>
</dbReference>
<dbReference type="Pfam" id="PF18397">
    <property type="entry name" value="IKBKB_SDD"/>
    <property type="match status" value="1"/>
</dbReference>
<dbReference type="Pfam" id="PF12179">
    <property type="entry name" value="IKKbetaNEMObind"/>
    <property type="match status" value="1"/>
</dbReference>
<dbReference type="Pfam" id="PF00069">
    <property type="entry name" value="Pkinase"/>
    <property type="match status" value="1"/>
</dbReference>
<dbReference type="SMART" id="SM01239">
    <property type="entry name" value="IKKbetaNEMObind"/>
    <property type="match status" value="1"/>
</dbReference>
<dbReference type="SMART" id="SM00220">
    <property type="entry name" value="S_TKc"/>
    <property type="match status" value="1"/>
</dbReference>
<dbReference type="SUPFAM" id="SSF56112">
    <property type="entry name" value="Protein kinase-like (PK-like)"/>
    <property type="match status" value="1"/>
</dbReference>
<dbReference type="PROSITE" id="PS00107">
    <property type="entry name" value="PROTEIN_KINASE_ATP"/>
    <property type="match status" value="1"/>
</dbReference>
<dbReference type="PROSITE" id="PS50011">
    <property type="entry name" value="PROTEIN_KINASE_DOM"/>
    <property type="match status" value="1"/>
</dbReference>
<dbReference type="PROSITE" id="PS00108">
    <property type="entry name" value="PROTEIN_KINASE_ST"/>
    <property type="match status" value="1"/>
</dbReference>
<evidence type="ECO:0000250" key="1">
    <source>
        <dbReference type="UniProtKB" id="Q60680"/>
    </source>
</evidence>
<evidence type="ECO:0000255" key="2">
    <source>
        <dbReference type="PROSITE-ProRule" id="PRU00159"/>
    </source>
</evidence>
<evidence type="ECO:0000255" key="3">
    <source>
        <dbReference type="PROSITE-ProRule" id="PRU10027"/>
    </source>
</evidence>
<evidence type="ECO:0000269" key="4">
    <source>
    </source>
</evidence>
<evidence type="ECO:0000269" key="5">
    <source>
    </source>
</evidence>
<evidence type="ECO:0000269" key="6">
    <source>
    </source>
</evidence>
<evidence type="ECO:0000269" key="7">
    <source>
    </source>
</evidence>
<evidence type="ECO:0000269" key="8">
    <source>
    </source>
</evidence>
<evidence type="ECO:0000269" key="9">
    <source>
    </source>
</evidence>
<evidence type="ECO:0000269" key="10">
    <source>
    </source>
</evidence>
<evidence type="ECO:0000269" key="11">
    <source>
    </source>
</evidence>
<evidence type="ECO:0000269" key="12">
    <source>
    </source>
</evidence>
<evidence type="ECO:0000269" key="13">
    <source>
    </source>
</evidence>
<evidence type="ECO:0000269" key="14">
    <source>
    </source>
</evidence>
<evidence type="ECO:0000269" key="15">
    <source>
    </source>
</evidence>
<evidence type="ECO:0000269" key="16">
    <source>
    </source>
</evidence>
<evidence type="ECO:0000269" key="17">
    <source>
    </source>
</evidence>
<evidence type="ECO:0000269" key="18">
    <source>
    </source>
</evidence>
<evidence type="ECO:0000269" key="19">
    <source>
    </source>
</evidence>
<evidence type="ECO:0000269" key="20">
    <source>
    </source>
</evidence>
<evidence type="ECO:0000269" key="21">
    <source>
    </source>
</evidence>
<evidence type="ECO:0000269" key="22">
    <source>
    </source>
</evidence>
<evidence type="ECO:0000269" key="23">
    <source>
    </source>
</evidence>
<evidence type="ECO:0000269" key="24">
    <source>
    </source>
</evidence>
<evidence type="ECO:0000269" key="25">
    <source>
    </source>
</evidence>
<evidence type="ECO:0000269" key="26">
    <source>
    </source>
</evidence>
<evidence type="ECO:0000269" key="27">
    <source>
    </source>
</evidence>
<evidence type="ECO:0000269" key="28">
    <source>
    </source>
</evidence>
<evidence type="ECO:0000269" key="29">
    <source>
    </source>
</evidence>
<evidence type="ECO:0000269" key="30">
    <source>
    </source>
</evidence>
<evidence type="ECO:0000269" key="31">
    <source>
    </source>
</evidence>
<evidence type="ECO:0000269" key="32">
    <source>
    </source>
</evidence>
<evidence type="ECO:0000269" key="33">
    <source>
    </source>
</evidence>
<evidence type="ECO:0000269" key="34">
    <source>
    </source>
</evidence>
<evidence type="ECO:0000269" key="35">
    <source>
    </source>
</evidence>
<evidence type="ECO:0000269" key="36">
    <source>
    </source>
</evidence>
<evidence type="ECO:0000269" key="37">
    <source>
    </source>
</evidence>
<evidence type="ECO:0000269" key="38">
    <source>
    </source>
</evidence>
<evidence type="ECO:0000269" key="39">
    <source>
    </source>
</evidence>
<evidence type="ECO:0000269" key="40">
    <source>
    </source>
</evidence>
<evidence type="ECO:0000269" key="41">
    <source>
    </source>
</evidence>
<evidence type="ECO:0000303" key="42">
    <source>
    </source>
</evidence>
<evidence type="ECO:0000303" key="43">
    <source>
    </source>
</evidence>
<evidence type="ECO:0000305" key="44"/>
<evidence type="ECO:0007829" key="45">
    <source>
        <dbReference type="PDB" id="3BRT"/>
    </source>
</evidence>
<protein>
    <recommendedName>
        <fullName>Inhibitor of nuclear factor kappa-B kinase subunit alpha</fullName>
        <shortName>I-kappa-B kinase alpha</shortName>
        <shortName>IKK-A</shortName>
        <shortName>IKK-alpha</shortName>
        <shortName>IkBKA</shortName>
        <shortName>IkappaB kinase</shortName>
        <ecNumber evidence="36 37 38">2.7.11.10</ecNumber>
    </recommendedName>
    <alternativeName>
        <fullName>Conserved helix-loop-helix ubiquitous kinase</fullName>
    </alternativeName>
    <alternativeName>
        <fullName evidence="43">I-kappa-B kinase 1</fullName>
        <shortName evidence="43">IKK-1</shortName>
        <shortName evidence="43">IKK1</shortName>
    </alternativeName>
    <alternativeName>
        <fullName>Nuclear factor NF-kappa-B inhibitor kinase alpha</fullName>
        <shortName>NFKBIKA</shortName>
    </alternativeName>
    <alternativeName>
        <fullName>Transcription factor 16</fullName>
        <shortName>TCF-16</shortName>
    </alternativeName>
</protein>
<comment type="function">
    <text evidence="1 8 9 16 21 22 25 31 34 36 37 38 42">Serine kinase that plays an essential role in the NF-kappa-B signaling pathway which is activated by multiple stimuli such as inflammatory cytokines, bacterial or viral products, DNA damages or other cellular stresses (PubMed:18626576, PubMed:9244310, PubMed:9252186, PubMed:9346484). Acts as a part of the canonical IKK complex in the conventional pathway of NF-kappa-B activation and phosphorylates inhibitors of NF-kappa-B on serine residues (PubMed:18626576, PubMed:35952808, PubMed:9244310, PubMed:9252186, PubMed:9346484). These modifications allow polyubiquitination of the inhibitors and subsequent degradation by the proteasome (PubMed:18626576, PubMed:9244310, PubMed:9252186, PubMed:9346484). In turn, free NF-kappa-B is translocated into the nucleus and activates the transcription of hundreds of genes involved in immune response, growth control, or protection against apoptosis (PubMed:18626576, PubMed:9244310, PubMed:9252186, PubMed:9346484). Negatively regulates the pathway by phosphorylating the scaffold protein TAXBP1 and thus promoting the assembly of the A20/TNFAIP3 ubiquitin-editing complex (composed of A20/TNFAIP3, TAX1BP1, and the E3 ligases ITCH and RNF11) (PubMed:21765415). Therefore, CHUK plays a key role in the negative feedback of NF-kappa-B canonical signaling to limit inflammatory gene activation. As part of the non-canonical pathway of NF-kappa-B activation, the MAP3K14-activated CHUK/IKKA homodimer phosphorylates NFKB2/p100 associated with RelB, inducing its proteolytic processing to NFKB2/p52 and the formation of NF-kappa-B RelB-p52 complexes (PubMed:20501937). In turn, these complexes regulate genes encoding molecules involved in B-cell survival and lymphoid organogenesis. Also participates in the negative feedback of the non-canonical NF-kappa-B signaling pathway by phosphorylating and destabilizing MAP3K14/NIK. Within the nucleus, phosphorylates CREBBP and consequently increases both its transcriptional and histone acetyltransferase activities (PubMed:17434128). Modulates chromatin accessibility at NF-kappa-B-responsive promoters by phosphorylating histones H3 at 'Ser-10' that are subsequently acetylated at 'Lys-14' by CREBBP (PubMed:12789342). Additionally, phosphorylates the CREBBP-interacting protein NCOA3. Also phosphorylates FOXO3 and may regulate this pro-apoptotic transcription factor (PubMed:15084260). Phosphorylates RIPK1 at 'Ser-25' which represses its kinase activity and consequently prevents TNF-mediated RIPK1-dependent cell death (By similarity). Phosphorylates AMBRA1 following mitophagy induction, promoting AMBRA1 interaction with ATG8 family proteins and its mitophagic activity (PubMed:30217973).</text>
</comment>
<comment type="catalytic activity">
    <reaction evidence="36 37 38">
        <text>L-seryl-[I-kappa-B protein] + ATP = O-phospho-L-seryl-[I-kappa-B protein] + ADP + H(+)</text>
        <dbReference type="Rhea" id="RHEA:19073"/>
        <dbReference type="Rhea" id="RHEA-COMP:13698"/>
        <dbReference type="Rhea" id="RHEA-COMP:13699"/>
        <dbReference type="ChEBI" id="CHEBI:15378"/>
        <dbReference type="ChEBI" id="CHEBI:29999"/>
        <dbReference type="ChEBI" id="CHEBI:30616"/>
        <dbReference type="ChEBI" id="CHEBI:83421"/>
        <dbReference type="ChEBI" id="CHEBI:456216"/>
        <dbReference type="EC" id="2.7.11.10"/>
    </reaction>
</comment>
<comment type="activity regulation">
    <text>Activated when phosphorylated and inactivated when dephosphorylated.</text>
</comment>
<comment type="subunit">
    <text evidence="1 4 6 7 9 11 12 13 17 20 21 26 27 29 30 32 33 40">Component of the I-kappa-B-kinase (IKK) core complex consisting of CHUK, IKBKB and IKBKG; probably four alpha/CHUK-beta/IKBKB dimers are associated with four gamma/IKBKG subunits (PubMed:32935379). The IKK core complex seems to associate with regulatory or adapter proteins to form a IKK-signalosome holo-complex (PubMed:10195894, PubMed:12612076). The IKK complex associates with TERF2IP/RAP1, leading to promote IKK-mediated phosphorylation of RELA/p65 (By similarity). Part of a complex composed of NCOA2, NCOA3, CHUK/IKKA, IKBKB, IKBKG and CREBBP (PubMed:11971985). Part of a 70-90 kDa complex at least consisting of CHUK/IKKA, IKBKB, NFKBIA, RELA, ELP1 and MAP3K14 (PubMed:9751059). Directly interacts with TRPC4AP (By similarity). May interact with TRAF2 (PubMed:19150425). Interacts with NALP2 (PubMed:15456791). May interact with MAVS/IPS1 (PubMed:16177806). Interacts with ARRB1 and ARRB2 (PubMed:15173580). Interacts with NLRC5; prevents CHUK phosphorylation and kinase activity (PubMed:20434986). Interacts with PIAS1; this interaction induces PIAS1 phosphorylation (PubMed:17540171). Interacts with ZNF268 isoform 2; the interaction is further increased in a TNF-alpha-dependent manner (PubMed:23091055). Interacts with FOXO3 (PubMed:15084260). Interacts with IFIT5; the interaction synergizes the recruitment of IKK to MAP3K7 and enhances IKK phosphorylation (PubMed:26334375). Interacts with LRRC14 (PubMed:27426725). Interacts with SASH1 (PubMed:23776175). Directly interacts with DDX3X after the physiological activation of the TLR7 and TLR8 pathways; this interaction enhances CHUK autophosphorylation (PubMed:30341167).</text>
</comment>
<comment type="subunit">
    <text evidence="23">(Microbial infection) Interacts with InlC of Listeria monocytogenes.</text>
</comment>
<comment type="interaction">
    <interactant intactId="EBI-81249">
        <id>O15111</id>
    </interactant>
    <interactant intactId="EBI-295634">
        <id>Q16543</id>
        <label>CDC37</label>
    </interactant>
    <organismsDiffer>false</organismsDiffer>
    <experiments>9</experiments>
</comment>
<comment type="interaction">
    <interactant intactId="EBI-81249">
        <id>O15111</id>
    </interactant>
    <interactant intactId="EBI-519280">
        <id>P46527</id>
        <label>CDKN1B</label>
    </interactant>
    <organismsDiffer>false</organismsDiffer>
    <experiments>4</experiments>
</comment>
<comment type="interaction">
    <interactant intactId="EBI-81249">
        <id>O15111</id>
    </interactant>
    <interactant intactId="EBI-306914">
        <id>Q13451</id>
        <label>FKBP5</label>
    </interactant>
    <organismsDiffer>false</organismsDiffer>
    <experiments>5</experiments>
</comment>
<comment type="interaction">
    <interactant intactId="EBI-81249">
        <id>O15111</id>
    </interactant>
    <interactant intactId="EBI-296047">
        <id>P07900</id>
        <label>HSP90AA1</label>
    </interactant>
    <organismsDiffer>false</organismsDiffer>
    <experiments>4</experiments>
</comment>
<comment type="interaction">
    <interactant intactId="EBI-81249">
        <id>O15111</id>
    </interactant>
    <interactant intactId="EBI-352572">
        <id>P08238</id>
        <label>HSP90AB1</label>
    </interactant>
    <organismsDiffer>false</organismsDiffer>
    <experiments>2</experiments>
</comment>
<comment type="interaction">
    <interactant intactId="EBI-81249">
        <id>O15111</id>
    </interactant>
    <interactant intactId="EBI-81266">
        <id>O14920</id>
        <label>IKBKB</label>
    </interactant>
    <organismsDiffer>false</organismsDiffer>
    <experiments>20</experiments>
</comment>
<comment type="interaction">
    <interactant intactId="EBI-81249">
        <id>O15111</id>
    </interactant>
    <interactant intactId="EBI-81279">
        <id>Q9Y6K9</id>
        <label>IKBKG</label>
    </interactant>
    <organismsDiffer>false</organismsDiffer>
    <experiments>30</experiments>
</comment>
<comment type="interaction">
    <interactant intactId="EBI-81249">
        <id>O15111</id>
    </interactant>
    <interactant intactId="EBI-968267">
        <id>Q92985</id>
        <label>IRF7</label>
    </interactant>
    <organismsDiffer>false</organismsDiffer>
    <experiments>4</experiments>
</comment>
<comment type="interaction">
    <interactant intactId="EBI-81249">
        <id>O15111</id>
    </interactant>
    <interactant intactId="EBI-358011">
        <id>Q99558</id>
        <label>MAP3K14</label>
    </interactant>
    <organismsDiffer>false</organismsDiffer>
    <experiments>13</experiments>
</comment>
<comment type="interaction">
    <interactant intactId="EBI-81249">
        <id>O15111</id>
    </interactant>
    <interactant intactId="EBI-1057380">
        <id>Q5TCX8</id>
        <label>MAP3K21</label>
    </interactant>
    <organismsDiffer>false</organismsDiffer>
    <experiments>2</experiments>
</comment>
<comment type="interaction">
    <interactant intactId="EBI-81249">
        <id>O15111</id>
    </interactant>
    <interactant intactId="EBI-447544">
        <id>P01106</id>
        <label>MYC</label>
    </interactant>
    <organismsDiffer>false</organismsDiffer>
    <experiments>3</experiments>
</comment>
<comment type="interaction">
    <interactant intactId="EBI-81249">
        <id>O15111</id>
    </interactant>
    <interactant intactId="EBI-300010">
        <id>P19838</id>
        <label>NFKB1</label>
    </interactant>
    <organismsDiffer>false</organismsDiffer>
    <experiments>4</experiments>
</comment>
<comment type="interaction">
    <interactant intactId="EBI-81249">
        <id>O15111</id>
    </interactant>
    <interactant intactId="EBI-307386">
        <id>P25963</id>
        <label>NFKBIA</label>
    </interactant>
    <organismsDiffer>false</organismsDiffer>
    <experiments>16</experiments>
</comment>
<comment type="interaction">
    <interactant intactId="EBI-81249">
        <id>O15111</id>
    </interactant>
    <interactant intactId="EBI-352889">
        <id>Q15653</id>
        <label>NFKBIB</label>
    </interactant>
    <organismsDiffer>false</organismsDiffer>
    <experiments>2</experiments>
</comment>
<comment type="interaction">
    <interactant intactId="EBI-81249">
        <id>O15111</id>
    </interactant>
    <interactant intactId="EBI-73886">
        <id>Q04206</id>
        <label>RELA</label>
    </interactant>
    <organismsDiffer>false</organismsDiffer>
    <experiments>3</experiments>
</comment>
<comment type="interaction">
    <interactant intactId="EBI-81249">
        <id>O15111</id>
    </interactant>
    <interactant intactId="EBI-1040141">
        <id>Q15796</id>
        <label>SMAD2</label>
    </interactant>
    <organismsDiffer>false</organismsDiffer>
    <experiments>2</experiments>
</comment>
<comment type="interaction">
    <interactant intactId="EBI-81249">
        <id>O15111</id>
    </interactant>
    <interactant intactId="EBI-529518">
        <id>Q86VP1</id>
        <label>TAX1BP1</label>
    </interactant>
    <organismsDiffer>false</organismsDiffer>
    <experiments>2</experiments>
</comment>
<comment type="interaction">
    <interactant intactId="EBI-81249">
        <id>O15111</id>
    </interactant>
    <interactant intactId="EBI-866453">
        <id>P03129</id>
        <label>E7</label>
    </interactant>
    <organismsDiffer>true</organismsDiffer>
    <experiments>2</experiments>
</comment>
<comment type="interaction">
    <interactant intactId="EBI-81249">
        <id>O15111</id>
    </interactant>
    <interactant intactId="EBI-9690349">
        <id>Q07857</id>
        <label>E7</label>
    </interactant>
    <organismsDiffer>true</organismsDiffer>
    <experiments>2</experiments>
</comment>
<comment type="interaction">
    <interactant intactId="EBI-81249">
        <id>O15111</id>
    </interactant>
    <interactant intactId="EBI-9690312">
        <id>Q6TY28</id>
        <label>E7</label>
    </interactant>
    <organismsDiffer>true</organismsDiffer>
    <experiments>2</experiments>
</comment>
<comment type="interaction">
    <interactant intactId="EBI-81249">
        <id>O15111</id>
    </interactant>
    <interactant intactId="EBI-9690239">
        <id>Q6TY35</id>
        <label>E7</label>
    </interactant>
    <organismsDiffer>true</organismsDiffer>
    <experiments>2</experiments>
</comment>
<comment type="interaction">
    <interactant intactId="EBI-81249">
        <id>O15111</id>
    </interactant>
    <interactant intactId="EBI-9690278">
        <id>Q80901</id>
        <label>E7</label>
    </interactant>
    <organismsDiffer>true</organismsDiffer>
    <experiments>2</experiments>
</comment>
<comment type="interaction">
    <interactant intactId="EBI-81249">
        <id>O15111</id>
    </interactant>
    <interactant intactId="EBI-9690330">
        <id>Q8B5B5</id>
        <label>E7</label>
    </interactant>
    <organismsDiffer>true</organismsDiffer>
    <experiments>2</experiments>
</comment>
<comment type="interaction">
    <interactant intactId="EBI-81249">
        <id>O15111</id>
    </interactant>
    <interactant intactId="EBI-21019720">
        <id>P71451</id>
        <label>inlC</label>
    </interactant>
    <organismsDiffer>true</organismsDiffer>
    <experiments>3</experiments>
</comment>
<comment type="interaction">
    <interactant intactId="EBI-81249">
        <id>O15111</id>
    </interactant>
    <interactant intactId="EBI-4291651">
        <id>P24772</id>
        <label>OPG200</label>
    </interactant>
    <organismsDiffer>true</organismsDiffer>
    <experiments>3</experiments>
</comment>
<comment type="interaction">
    <interactant intactId="EBI-81249">
        <id>O15111</id>
    </interactant>
    <interactant intactId="EBI-6149376">
        <id>Q77M19</id>
        <label>P</label>
    </interactant>
    <organismsDiffer>true</organismsDiffer>
    <experiments>2</experiments>
</comment>
<comment type="subcellular location">
    <subcellularLocation>
        <location evidence="8 32">Cytoplasm</location>
    </subcellularLocation>
    <subcellularLocation>
        <location evidence="8">Nucleus</location>
    </subcellularLocation>
    <text>Shuttles between the cytoplasm and the nucleus.</text>
</comment>
<comment type="tissue specificity">
    <text>Widely expressed.</text>
</comment>
<comment type="domain">
    <text evidence="18">The kinase domain is located in the N-terminal region. The leucine zipper is important to allow homo- and hetero-dimerization. At the C-terminal region is located the region responsible for the interaction with NEMO/IKBKG.</text>
</comment>
<comment type="PTM">
    <text>Phosphorylated by MAP3K14/NIK, AKT and to a lesser extent by MEKK1, and dephosphorylated by PP2A. Autophosphorylated.</text>
</comment>
<comment type="PTM">
    <text evidence="34">Ubiquitinated by TRIM56 via 'Lys-63'-linked ubiquitination, promoting activation of CHUK/IKKA.</text>
</comment>
<comment type="PTM">
    <text evidence="14">(Microbial infection) Acetylation of Thr-179 by Yersinia YopJ prevents phosphorylation and activation, thus blocking the I-kappa-B signaling pathway.</text>
</comment>
<comment type="disease" evidence="24">
    <disease id="DI-02978">
        <name>Cocoon syndrome</name>
        <acronym>COCOS</acronym>
        <description>A lethal syndrome characterized by multiple fetal malformations including defective face and seemingly absent limbs, which are bound to the trunk and encased under the skin.</description>
        <dbReference type="MIM" id="613630"/>
    </disease>
    <text>The disease is caused by variants affecting the gene represented in this entry.</text>
</comment>
<comment type="disease" evidence="28">
    <disease id="DI-06116">
        <name>Bartsocas-Papas syndrome 2</name>
        <acronym>BPS2</acronym>
        <description>An autosomal recessive, severe form of popliteal pterygium syndrome. Popliteal pterygia syndromes have considerable variability in severity and in the associated phenotypic features but they are all characterized by cutaneous webbing across one or more major joints, cleft lip and/or palate, syndactyly, and genital malformations.</description>
        <dbReference type="MIM" id="619339"/>
    </disease>
    <text>The disease may be caused by variants affecting the gene represented in this entry.</text>
</comment>
<comment type="similarity">
    <text evidence="2">Belongs to the protein kinase superfamily. Ser/Thr protein kinase family. I-kappa-B kinase subfamily.</text>
</comment>
<gene>
    <name type="primary">CHUK</name>
    <name type="synonym">IKKA</name>
    <name type="synonym">TCF16</name>
</gene>
<sequence>MERPPGLRPGAGGPWEMRERLGTGGFGNVCLYQHRELDLKIAIKSCRLELSTKNRERWCHEIQIMKKLNHANVVKACDVPEELNILIHDVPLLAMEYCSGGDLRKLLNKPENCCGLKESQILSLLSDIGSGIRYLHENKIIHRDLKPENIVLQDVGGKIIHKIIDLGYAKDVDQGSLCTSFVGTLQYLAPELFENKPYTATVDYWSFGTMVFECIAGYRPFLHHLQPFTWHEKIKKKDPKCIFACEEMSGEVRFSSHLPQPNSLCSLVVEPMENWLQLMLNWDPQQRGGPVDLTLKQPRCFVLMDHILNLKIVHILNMTSAKIISFLLPPDESLHSLQSRIERETGINTGSQELLSETGISLDPRKPASQCVLDGVRGCDSYMVYLFDKSKTVYEGPFASRSLSDCVNYIVQDSKIQLPIIQLRKVWAEAVHYVSGLKEDYSRLFQGQRAAMLSLLRYNANLTKMKNTLISASQQLKAKLEFFHKSIQLDLERYSEQMTYGISSEKMLKAWKEMEEKAIHYAEVGVIGYLEDQIMSLHAEIMELQKSPYGRRQGDLMESLEQRAIDLYKQLKHRPSDHSYSDSTEMVKIIVHTVQSQDRVLKELFGHLSKLLGCKQKIIDLLPKVEVALSNIKEADNTVMFMQGKRQKEIWHLLKIACTQSSARSLVGSSLEGAVTPQTSAWLPPTSAEHDHSLSCVVTPQDGETSAQMIEENLNCLGHLSTIIHEANEEQGNSMMNLDWSWLTE</sequence>
<feature type="chain" id="PRO_0000086011" description="Inhibitor of nuclear factor kappa-B kinase subunit alpha">
    <location>
        <begin position="1"/>
        <end position="745"/>
    </location>
</feature>
<feature type="domain" description="Protein kinase" evidence="2">
    <location>
        <begin position="15"/>
        <end position="302"/>
    </location>
</feature>
<feature type="region of interest" description="Leucine-zipper">
    <location>
        <begin position="455"/>
        <end position="476"/>
    </location>
</feature>
<feature type="region of interest" description="NEMO-binding">
    <location>
        <begin position="738"/>
        <end position="743"/>
    </location>
</feature>
<feature type="active site" description="Proton acceptor" evidence="2 3">
    <location>
        <position position="144"/>
    </location>
</feature>
<feature type="binding site" evidence="2">
    <location>
        <begin position="21"/>
        <end position="29"/>
    </location>
    <ligand>
        <name>ATP</name>
        <dbReference type="ChEBI" id="CHEBI:30616"/>
    </ligand>
</feature>
<feature type="binding site" evidence="2">
    <location>
        <position position="44"/>
    </location>
    <ligand>
        <name>ATP</name>
        <dbReference type="ChEBI" id="CHEBI:30616"/>
    </ligand>
</feature>
<feature type="modified residue" description="Phosphothreonine; by PKB/AKT1 and SGK1" evidence="5 19">
    <location>
        <position position="23"/>
    </location>
</feature>
<feature type="modified residue" description="Phosphoserine; by MAP3K14" evidence="39">
    <location>
        <position position="176"/>
    </location>
</feature>
<feature type="modified residue" description="(Microbial infection) O-acetylthreonine; by Yersinia YopJ" evidence="14">
    <location>
        <position position="179"/>
    </location>
</feature>
<feature type="modified residue" description="Phosphoserine; by SGK1" evidence="19">
    <location>
        <position position="180"/>
    </location>
</feature>
<feature type="sequence variant" id="VAR_040565" description="In dbSNP:rs34427437." evidence="15">
    <original>S</original>
    <variation>C</variation>
    <location>
        <position position="126"/>
    </location>
</feature>
<feature type="sequence variant" id="VAR_040566" description="In dbSNP:rs2230803." evidence="15">
    <original>V</original>
    <variation>A</variation>
    <location>
        <position position="155"/>
    </location>
</feature>
<feature type="sequence variant" id="VAR_021359" description="In dbSNP:rs2230804." evidence="10 15 35 36 37 41">
    <original>V</original>
    <variation>I</variation>
    <location>
        <position position="268"/>
    </location>
</feature>
<feature type="mutagenesis site" description="Loss of phosphorylation and decrease of kinase activity." evidence="5">
    <original>T</original>
    <variation>A</variation>
    <location>
        <position position="23"/>
    </location>
</feature>
<feature type="mutagenesis site" description="Loss of kinase activity." evidence="36 38">
    <original>K</original>
    <variation>A</variation>
    <location>
        <position position="44"/>
    </location>
</feature>
<feature type="mutagenesis site" description="Loss of autophosphorylation." evidence="36 38">
    <original>K</original>
    <variation>M</variation>
    <location>
        <position position="44"/>
    </location>
</feature>
<feature type="mutagenesis site" description="Loss of phosphorylation and of activity." evidence="38 39">
    <original>S</original>
    <variation>A</variation>
    <location>
        <position position="176"/>
    </location>
</feature>
<feature type="mutagenesis site" description="Full activation." evidence="38 39">
    <original>S</original>
    <variation>E</variation>
    <location>
        <position position="176"/>
    </location>
</feature>
<feature type="mutagenesis site" description="No change in phosphorylation." evidence="39">
    <original>T</original>
    <variation>A</variation>
    <location>
        <position position="179"/>
    </location>
</feature>
<feature type="mutagenesis site" description="No change in phosphorylation." evidence="39">
    <original>S</original>
    <variation>A</variation>
    <location>
        <position position="180"/>
    </location>
</feature>
<feature type="sequence conflict" description="In Ref. 2; AAC51671." evidence="44" ref="2">
    <original>E</original>
    <variation>G</variation>
    <location>
        <position position="543"/>
    </location>
</feature>
<feature type="sequence conflict" description="In Ref. 7; AAC50713." evidence="44" ref="7">
    <original>L</original>
    <variation>R</variation>
    <location>
        <position position="604"/>
    </location>
</feature>
<feature type="sequence conflict" description="In Ref. 7; AAC50713." evidence="44" ref="7">
    <original>TS</original>
    <variation>AY</variation>
    <location>
        <begin position="679"/>
        <end position="680"/>
    </location>
</feature>
<feature type="sequence conflict" description="In Ref. 3; no nucleotide entry and 7; AAC50713." evidence="44" ref="3 7">
    <original>P</original>
    <variation>A</variation>
    <location>
        <position position="684"/>
    </location>
</feature>
<feature type="sequence conflict" description="In Ref. 7; AAC50713." evidence="44" ref="7">
    <original>TS</original>
    <variation>DL</variation>
    <location>
        <begin position="686"/>
        <end position="687"/>
    </location>
</feature>
<feature type="helix" evidence="45">
    <location>
        <begin position="735"/>
        <end position="737"/>
    </location>
</feature>
<feature type="helix" evidence="45">
    <location>
        <begin position="741"/>
        <end position="743"/>
    </location>
</feature>
<organism>
    <name type="scientific">Homo sapiens</name>
    <name type="common">Human</name>
    <dbReference type="NCBI Taxonomy" id="9606"/>
    <lineage>
        <taxon>Eukaryota</taxon>
        <taxon>Metazoa</taxon>
        <taxon>Chordata</taxon>
        <taxon>Craniata</taxon>
        <taxon>Vertebrata</taxon>
        <taxon>Euteleostomi</taxon>
        <taxon>Mammalia</taxon>
        <taxon>Eutheria</taxon>
        <taxon>Euarchontoglires</taxon>
        <taxon>Primates</taxon>
        <taxon>Haplorrhini</taxon>
        <taxon>Catarrhini</taxon>
        <taxon>Hominidae</taxon>
        <taxon>Homo</taxon>
    </lineage>
</organism>
<keyword id="KW-0002">3D-structure</keyword>
<keyword id="KW-0007">Acetylation</keyword>
<keyword id="KW-0067">ATP-binding</keyword>
<keyword id="KW-0963">Cytoplasm</keyword>
<keyword id="KW-0903">Direct protein sequencing</keyword>
<keyword id="KW-0418">Kinase</keyword>
<keyword id="KW-0547">Nucleotide-binding</keyword>
<keyword id="KW-0539">Nucleus</keyword>
<keyword id="KW-0597">Phosphoprotein</keyword>
<keyword id="KW-1267">Proteomics identification</keyword>
<keyword id="KW-1185">Reference proteome</keyword>
<keyword id="KW-0723">Serine/threonine-protein kinase</keyword>
<keyword id="KW-0808">Transferase</keyword>
<keyword id="KW-0832">Ubl conjugation</keyword>